<evidence type="ECO:0000255" key="1">
    <source>
        <dbReference type="HAMAP-Rule" id="MF_01225"/>
    </source>
</evidence>
<evidence type="ECO:0000255" key="2">
    <source>
        <dbReference type="PROSITE-ProRule" id="PRU01266"/>
    </source>
</evidence>
<feature type="chain" id="PRO_1000054196" description="GTP 3',8-cyclase">
    <location>
        <begin position="1"/>
        <end position="329"/>
    </location>
</feature>
<feature type="domain" description="Radical SAM core" evidence="2">
    <location>
        <begin position="8"/>
        <end position="234"/>
    </location>
</feature>
<feature type="binding site" evidence="1">
    <location>
        <position position="17"/>
    </location>
    <ligand>
        <name>GTP</name>
        <dbReference type="ChEBI" id="CHEBI:37565"/>
    </ligand>
</feature>
<feature type="binding site" evidence="1">
    <location>
        <position position="24"/>
    </location>
    <ligand>
        <name>[4Fe-4S] cluster</name>
        <dbReference type="ChEBI" id="CHEBI:49883"/>
        <label>1</label>
        <note>4Fe-4S-S-AdoMet</note>
    </ligand>
</feature>
<feature type="binding site" evidence="1">
    <location>
        <position position="28"/>
    </location>
    <ligand>
        <name>[4Fe-4S] cluster</name>
        <dbReference type="ChEBI" id="CHEBI:49883"/>
        <label>1</label>
        <note>4Fe-4S-S-AdoMet</note>
    </ligand>
</feature>
<feature type="binding site" evidence="1">
    <location>
        <position position="30"/>
    </location>
    <ligand>
        <name>S-adenosyl-L-methionine</name>
        <dbReference type="ChEBI" id="CHEBI:59789"/>
    </ligand>
</feature>
<feature type="binding site" evidence="1">
    <location>
        <position position="31"/>
    </location>
    <ligand>
        <name>[4Fe-4S] cluster</name>
        <dbReference type="ChEBI" id="CHEBI:49883"/>
        <label>1</label>
        <note>4Fe-4S-S-AdoMet</note>
    </ligand>
</feature>
<feature type="binding site" evidence="1">
    <location>
        <position position="68"/>
    </location>
    <ligand>
        <name>GTP</name>
        <dbReference type="ChEBI" id="CHEBI:37565"/>
    </ligand>
</feature>
<feature type="binding site" evidence="1">
    <location>
        <position position="72"/>
    </location>
    <ligand>
        <name>S-adenosyl-L-methionine</name>
        <dbReference type="ChEBI" id="CHEBI:59789"/>
    </ligand>
</feature>
<feature type="binding site" evidence="1">
    <location>
        <position position="99"/>
    </location>
    <ligand>
        <name>GTP</name>
        <dbReference type="ChEBI" id="CHEBI:37565"/>
    </ligand>
</feature>
<feature type="binding site" evidence="1">
    <location>
        <position position="123"/>
    </location>
    <ligand>
        <name>S-adenosyl-L-methionine</name>
        <dbReference type="ChEBI" id="CHEBI:59789"/>
    </ligand>
</feature>
<feature type="binding site" evidence="1">
    <location>
        <position position="160"/>
    </location>
    <ligand>
        <name>GTP</name>
        <dbReference type="ChEBI" id="CHEBI:37565"/>
    </ligand>
</feature>
<feature type="binding site" evidence="1">
    <location>
        <position position="194"/>
    </location>
    <ligand>
        <name>S-adenosyl-L-methionine</name>
        <dbReference type="ChEBI" id="CHEBI:59789"/>
    </ligand>
</feature>
<feature type="binding site" evidence="1">
    <location>
        <position position="257"/>
    </location>
    <ligand>
        <name>[4Fe-4S] cluster</name>
        <dbReference type="ChEBI" id="CHEBI:49883"/>
        <label>2</label>
        <note>4Fe-4S-substrate</note>
    </ligand>
</feature>
<feature type="binding site" evidence="1">
    <location>
        <position position="260"/>
    </location>
    <ligand>
        <name>[4Fe-4S] cluster</name>
        <dbReference type="ChEBI" id="CHEBI:49883"/>
        <label>2</label>
        <note>4Fe-4S-substrate</note>
    </ligand>
</feature>
<feature type="binding site" evidence="1">
    <location>
        <begin position="262"/>
        <end position="264"/>
    </location>
    <ligand>
        <name>GTP</name>
        <dbReference type="ChEBI" id="CHEBI:37565"/>
    </ligand>
</feature>
<feature type="binding site" evidence="1">
    <location>
        <position position="274"/>
    </location>
    <ligand>
        <name>[4Fe-4S] cluster</name>
        <dbReference type="ChEBI" id="CHEBI:49883"/>
        <label>2</label>
        <note>4Fe-4S-substrate</note>
    </ligand>
</feature>
<reference key="1">
    <citation type="submission" date="2006-09" db="EMBL/GenBank/DDBJ databases">
        <authorList>
            <consortium name="The Klebsiella pneumonia Genome Sequencing Project"/>
            <person name="McClelland M."/>
            <person name="Sanderson E.K."/>
            <person name="Spieth J."/>
            <person name="Clifton W.S."/>
            <person name="Latreille P."/>
            <person name="Sabo A."/>
            <person name="Pepin K."/>
            <person name="Bhonagiri V."/>
            <person name="Porwollik S."/>
            <person name="Ali J."/>
            <person name="Wilson R.K."/>
        </authorList>
    </citation>
    <scope>NUCLEOTIDE SEQUENCE [LARGE SCALE GENOMIC DNA]</scope>
    <source>
        <strain>ATCC 700721 / MGH 78578</strain>
    </source>
</reference>
<organism>
    <name type="scientific">Klebsiella pneumoniae subsp. pneumoniae (strain ATCC 700721 / MGH 78578)</name>
    <dbReference type="NCBI Taxonomy" id="272620"/>
    <lineage>
        <taxon>Bacteria</taxon>
        <taxon>Pseudomonadati</taxon>
        <taxon>Pseudomonadota</taxon>
        <taxon>Gammaproteobacteria</taxon>
        <taxon>Enterobacterales</taxon>
        <taxon>Enterobacteriaceae</taxon>
        <taxon>Klebsiella/Raoultella group</taxon>
        <taxon>Klebsiella</taxon>
        <taxon>Klebsiella pneumoniae complex</taxon>
    </lineage>
</organism>
<accession>A6T6M5</accession>
<protein>
    <recommendedName>
        <fullName evidence="1">GTP 3',8-cyclase</fullName>
        <ecNumber evidence="1">4.1.99.22</ecNumber>
    </recommendedName>
    <alternativeName>
        <fullName evidence="1">Molybdenum cofactor biosynthesis protein A</fullName>
    </alternativeName>
</protein>
<sequence>MASQLTDAFARKFYYLRLSITDVCNFRCTYCLPNGYKPGAVNNNGFLSVDEVRRVTRAFSALGTEKVRLTGGEPSLRRDFTEIIAAVRENPAIRQIAVTTNGYRLARDVERWRDAGLTAINVSVDSLDARQFHAITGQDKFHQVMDGIDAAFAAGFDKVKVNTVLMRDVNHHQLDTFLAWIQPRRIQLRFIELMETGEGSDLFRRHHLSGMVLRDELLRRGWIHQIRQRSDGPAQVFCHPDYAGEIGLIMPYEKDFCATCNRLRVSSVGKLHLCLFGEGGVDLRDLMAEDRQQAALEARIAEALTHKKQTHFLHQGNTGITQNLSYIGG</sequence>
<name>MOAA_KLEP7</name>
<comment type="function">
    <text evidence="1">Catalyzes the cyclization of GTP to (8S)-3',8-cyclo-7,8-dihydroguanosine 5'-triphosphate.</text>
</comment>
<comment type="catalytic activity">
    <reaction evidence="1">
        <text>GTP + AH2 + S-adenosyl-L-methionine = (8S)-3',8-cyclo-7,8-dihydroguanosine 5'-triphosphate + 5'-deoxyadenosine + L-methionine + A + H(+)</text>
        <dbReference type="Rhea" id="RHEA:49576"/>
        <dbReference type="ChEBI" id="CHEBI:13193"/>
        <dbReference type="ChEBI" id="CHEBI:15378"/>
        <dbReference type="ChEBI" id="CHEBI:17319"/>
        <dbReference type="ChEBI" id="CHEBI:17499"/>
        <dbReference type="ChEBI" id="CHEBI:37565"/>
        <dbReference type="ChEBI" id="CHEBI:57844"/>
        <dbReference type="ChEBI" id="CHEBI:59789"/>
        <dbReference type="ChEBI" id="CHEBI:131766"/>
        <dbReference type="EC" id="4.1.99.22"/>
    </reaction>
</comment>
<comment type="cofactor">
    <cofactor evidence="1">
        <name>[4Fe-4S] cluster</name>
        <dbReference type="ChEBI" id="CHEBI:49883"/>
    </cofactor>
    <text evidence="1">Binds 2 [4Fe-4S] clusters. Binds 1 [4Fe-4S] cluster coordinated with 3 cysteines and an exchangeable S-adenosyl-L-methionine and 1 [4Fe-4S] cluster coordinated with 3 cysteines and the GTP-derived substrate.</text>
</comment>
<comment type="pathway">
    <text evidence="1">Cofactor biosynthesis; molybdopterin biosynthesis.</text>
</comment>
<comment type="subunit">
    <text evidence="1">Monomer and homodimer.</text>
</comment>
<comment type="similarity">
    <text evidence="1">Belongs to the radical SAM superfamily. MoaA family.</text>
</comment>
<proteinExistence type="inferred from homology"/>
<gene>
    <name evidence="1" type="primary">moaA</name>
    <name type="ordered locus">KPN78578_07850</name>
    <name type="ORF">KPN_00810</name>
</gene>
<keyword id="KW-0004">4Fe-4S</keyword>
<keyword id="KW-0342">GTP-binding</keyword>
<keyword id="KW-0408">Iron</keyword>
<keyword id="KW-0411">Iron-sulfur</keyword>
<keyword id="KW-0456">Lyase</keyword>
<keyword id="KW-0479">Metal-binding</keyword>
<keyword id="KW-0501">Molybdenum cofactor biosynthesis</keyword>
<keyword id="KW-0547">Nucleotide-binding</keyword>
<keyword id="KW-0949">S-adenosyl-L-methionine</keyword>
<dbReference type="EC" id="4.1.99.22" evidence="1"/>
<dbReference type="EMBL" id="CP000647">
    <property type="protein sequence ID" value="ABR76246.1"/>
    <property type="molecule type" value="Genomic_DNA"/>
</dbReference>
<dbReference type="RefSeq" id="WP_012068478.1">
    <property type="nucleotide sequence ID" value="NC_009648.1"/>
</dbReference>
<dbReference type="SMR" id="A6T6M5"/>
<dbReference type="STRING" id="272620.KPN_00810"/>
<dbReference type="PaxDb" id="272620-KPN_00810"/>
<dbReference type="EnsemblBacteria" id="ABR76246">
    <property type="protein sequence ID" value="ABR76246"/>
    <property type="gene ID" value="KPN_00810"/>
</dbReference>
<dbReference type="KEGG" id="kpn:KPN_00810"/>
<dbReference type="HOGENOM" id="CLU_009273_0_1_6"/>
<dbReference type="UniPathway" id="UPA00344"/>
<dbReference type="Proteomes" id="UP000000265">
    <property type="component" value="Chromosome"/>
</dbReference>
<dbReference type="GO" id="GO:0051539">
    <property type="term" value="F:4 iron, 4 sulfur cluster binding"/>
    <property type="evidence" value="ECO:0007669"/>
    <property type="project" value="UniProtKB-UniRule"/>
</dbReference>
<dbReference type="GO" id="GO:0061799">
    <property type="term" value="F:cyclic pyranopterin monophosphate synthase activity"/>
    <property type="evidence" value="ECO:0007669"/>
    <property type="project" value="TreeGrafter"/>
</dbReference>
<dbReference type="GO" id="GO:0061798">
    <property type="term" value="F:GTP 3',8'-cyclase activity"/>
    <property type="evidence" value="ECO:0007669"/>
    <property type="project" value="UniProtKB-UniRule"/>
</dbReference>
<dbReference type="GO" id="GO:0005525">
    <property type="term" value="F:GTP binding"/>
    <property type="evidence" value="ECO:0007669"/>
    <property type="project" value="UniProtKB-UniRule"/>
</dbReference>
<dbReference type="GO" id="GO:0046872">
    <property type="term" value="F:metal ion binding"/>
    <property type="evidence" value="ECO:0007669"/>
    <property type="project" value="UniProtKB-KW"/>
</dbReference>
<dbReference type="GO" id="GO:1904047">
    <property type="term" value="F:S-adenosyl-L-methionine binding"/>
    <property type="evidence" value="ECO:0007669"/>
    <property type="project" value="UniProtKB-UniRule"/>
</dbReference>
<dbReference type="GO" id="GO:0006777">
    <property type="term" value="P:Mo-molybdopterin cofactor biosynthetic process"/>
    <property type="evidence" value="ECO:0007669"/>
    <property type="project" value="UniProtKB-UniRule"/>
</dbReference>
<dbReference type="CDD" id="cd01335">
    <property type="entry name" value="Radical_SAM"/>
    <property type="match status" value="1"/>
</dbReference>
<dbReference type="CDD" id="cd21117">
    <property type="entry name" value="Twitch_MoaA"/>
    <property type="match status" value="1"/>
</dbReference>
<dbReference type="FunFam" id="3.20.20.70:FF:000057">
    <property type="entry name" value="GTP 3',8-cyclase"/>
    <property type="match status" value="1"/>
</dbReference>
<dbReference type="Gene3D" id="3.20.20.70">
    <property type="entry name" value="Aldolase class I"/>
    <property type="match status" value="1"/>
</dbReference>
<dbReference type="HAMAP" id="MF_01225_B">
    <property type="entry name" value="MoaA_B"/>
    <property type="match status" value="1"/>
</dbReference>
<dbReference type="InterPro" id="IPR013785">
    <property type="entry name" value="Aldolase_TIM"/>
</dbReference>
<dbReference type="InterPro" id="IPR006638">
    <property type="entry name" value="Elp3/MiaA/NifB-like_rSAM"/>
</dbReference>
<dbReference type="InterPro" id="IPR013483">
    <property type="entry name" value="MoaA"/>
</dbReference>
<dbReference type="InterPro" id="IPR000385">
    <property type="entry name" value="MoaA_NifB_PqqE_Fe-S-bd_CS"/>
</dbReference>
<dbReference type="InterPro" id="IPR010505">
    <property type="entry name" value="MoaA_twitch"/>
</dbReference>
<dbReference type="InterPro" id="IPR050105">
    <property type="entry name" value="MoCo_biosynth_MoaA/MoaC"/>
</dbReference>
<dbReference type="InterPro" id="IPR007197">
    <property type="entry name" value="rSAM"/>
</dbReference>
<dbReference type="NCBIfam" id="TIGR02666">
    <property type="entry name" value="moaA"/>
    <property type="match status" value="1"/>
</dbReference>
<dbReference type="PANTHER" id="PTHR22960:SF28">
    <property type="entry name" value="GTP 3',8-CYCLASE"/>
    <property type="match status" value="1"/>
</dbReference>
<dbReference type="PANTHER" id="PTHR22960">
    <property type="entry name" value="MOLYBDOPTERIN COFACTOR SYNTHESIS PROTEIN A"/>
    <property type="match status" value="1"/>
</dbReference>
<dbReference type="Pfam" id="PF13353">
    <property type="entry name" value="Fer4_12"/>
    <property type="match status" value="1"/>
</dbReference>
<dbReference type="Pfam" id="PF06463">
    <property type="entry name" value="Mob_synth_C"/>
    <property type="match status" value="1"/>
</dbReference>
<dbReference type="Pfam" id="PF04055">
    <property type="entry name" value="Radical_SAM"/>
    <property type="match status" value="1"/>
</dbReference>
<dbReference type="SFLD" id="SFLDG01383">
    <property type="entry name" value="cyclic_pyranopterin_phosphate"/>
    <property type="match status" value="1"/>
</dbReference>
<dbReference type="SFLD" id="SFLDS00029">
    <property type="entry name" value="Radical_SAM"/>
    <property type="match status" value="1"/>
</dbReference>
<dbReference type="SMART" id="SM00729">
    <property type="entry name" value="Elp3"/>
    <property type="match status" value="1"/>
</dbReference>
<dbReference type="SUPFAM" id="SSF102114">
    <property type="entry name" value="Radical SAM enzymes"/>
    <property type="match status" value="1"/>
</dbReference>
<dbReference type="PROSITE" id="PS01305">
    <property type="entry name" value="MOAA_NIFB_PQQE"/>
    <property type="match status" value="1"/>
</dbReference>
<dbReference type="PROSITE" id="PS51918">
    <property type="entry name" value="RADICAL_SAM"/>
    <property type="match status" value="1"/>
</dbReference>